<proteinExistence type="predicted"/>
<evidence type="ECO:0000255" key="1"/>
<evidence type="ECO:0000269" key="2">
    <source>
    </source>
</evidence>
<comment type="subcellular location">
    <subcellularLocation>
        <location evidence="2">Mitochondrion</location>
    </subcellularLocation>
</comment>
<protein>
    <recommendedName>
        <fullName>TPR repeat-containing protein P27G11.02</fullName>
    </recommendedName>
</protein>
<sequence length="356" mass="40508">MRMQWIWKSRRSLQNVFIRRSSQYHKPFWRRPLPATLLGCAVLGVAAVYFAKPSPIDENYPRSVAKYLHEALYRQKGENNHDFQDAWKAYQSAIKQAESEKMDMESPPVQGIRLQMANLLASAGALHKAWSMYWDILERTSKLPDFLEQRVLIASKLIELSEPLGLQKDATKAADLIVKALLSKQFNGDDEQKSRLFEQSATLYFQAGTPSYAVPLYHEALNLTMANPSCHGLILMNNLATSLLAQTETVDKKHHETLMKQSQSWSQKAVDSYYFAYPKDRNQECHAGCAAAFYTLGQIAERQGNIDLALKHYKNSEALRKDDPYNDGSMLSHIAIDRLDKDAFIKKLDKSSSPTD</sequence>
<name>YIO2_SCHPO</name>
<dbReference type="EMBL" id="CU329670">
    <property type="protein sequence ID" value="CAB76023.1"/>
    <property type="molecule type" value="Genomic_DNA"/>
</dbReference>
<dbReference type="SMR" id="Q9P7N6"/>
<dbReference type="BioGRID" id="278382">
    <property type="interactions" value="14"/>
</dbReference>
<dbReference type="FunCoup" id="Q9P7N6">
    <property type="interactions" value="37"/>
</dbReference>
<dbReference type="PaxDb" id="4896-SPAP27G11.02.1"/>
<dbReference type="EnsemblFungi" id="SPAP27G11.02.1">
    <property type="protein sequence ID" value="SPAP27G11.02.1:pep"/>
    <property type="gene ID" value="SPAP27G11.02"/>
</dbReference>
<dbReference type="KEGG" id="spo:2541892"/>
<dbReference type="PomBase" id="SPAP27G11.02"/>
<dbReference type="VEuPathDB" id="FungiDB:SPAP27G11.02"/>
<dbReference type="eggNOG" id="ENOG502R9YY">
    <property type="taxonomic scope" value="Eukaryota"/>
</dbReference>
<dbReference type="HOGENOM" id="CLU_790253_0_0_1"/>
<dbReference type="InParanoid" id="Q9P7N6"/>
<dbReference type="OMA" id="QVAMMLE"/>
<dbReference type="PhylomeDB" id="Q9P7N6"/>
<dbReference type="PRO" id="PR:Q9P7N6"/>
<dbReference type="Proteomes" id="UP000002485">
    <property type="component" value="Chromosome I"/>
</dbReference>
<dbReference type="GO" id="GO:0031942">
    <property type="term" value="C:i-AAA complex"/>
    <property type="evidence" value="ECO:0000318"/>
    <property type="project" value="GO_Central"/>
</dbReference>
<dbReference type="GO" id="GO:0005739">
    <property type="term" value="C:mitochondrion"/>
    <property type="evidence" value="ECO:0007005"/>
    <property type="project" value="PomBase"/>
</dbReference>
<dbReference type="GO" id="GO:0140767">
    <property type="term" value="F:enzyme-substrate adaptor activity"/>
    <property type="evidence" value="ECO:0000304"/>
    <property type="project" value="PomBase"/>
</dbReference>
<dbReference type="GO" id="GO:0051787">
    <property type="term" value="F:misfolded protein binding"/>
    <property type="evidence" value="ECO:0000318"/>
    <property type="project" value="GO_Central"/>
</dbReference>
<dbReference type="GO" id="GO:0035694">
    <property type="term" value="P:mitochondrial protein catabolic process"/>
    <property type="evidence" value="ECO:0000266"/>
    <property type="project" value="PomBase"/>
</dbReference>
<dbReference type="GO" id="GO:0141164">
    <property type="term" value="P:mitochondrial protein quality control"/>
    <property type="evidence" value="ECO:0000304"/>
    <property type="project" value="PomBase"/>
</dbReference>
<dbReference type="GO" id="GO:0006515">
    <property type="term" value="P:protein quality control for misfolded or incompletely synthesized proteins"/>
    <property type="evidence" value="ECO:0000318"/>
    <property type="project" value="GO_Central"/>
</dbReference>
<dbReference type="CDD" id="cd24145">
    <property type="entry name" value="Mgr3-like"/>
    <property type="match status" value="1"/>
</dbReference>
<dbReference type="Gene3D" id="1.25.40.10">
    <property type="entry name" value="Tetratricopeptide repeat domain"/>
    <property type="match status" value="1"/>
</dbReference>
<dbReference type="InterPro" id="IPR040201">
    <property type="entry name" value="Mrg3-like"/>
</dbReference>
<dbReference type="InterPro" id="IPR011990">
    <property type="entry name" value="TPR-like_helical_dom_sf"/>
</dbReference>
<dbReference type="InterPro" id="IPR019734">
    <property type="entry name" value="TPR_rpt"/>
</dbReference>
<dbReference type="PANTHER" id="PTHR28142">
    <property type="entry name" value="MITOCHONDRIAL INNER MEMBRANE I-AAA PROTEASE SUPERCOMPLEX SUBUNIT MGR3-RELATED"/>
    <property type="match status" value="1"/>
</dbReference>
<dbReference type="PANTHER" id="PTHR28142:SF1">
    <property type="entry name" value="MITOCHONDRIAL INNER MEMBRANE I-AAA PROTEASE SUPERCOMPLEX SUBUNIT MGR3-RELATED"/>
    <property type="match status" value="1"/>
</dbReference>
<dbReference type="SMART" id="SM00028">
    <property type="entry name" value="TPR"/>
    <property type="match status" value="1"/>
</dbReference>
<dbReference type="SUPFAM" id="SSF48452">
    <property type="entry name" value="TPR-like"/>
    <property type="match status" value="1"/>
</dbReference>
<dbReference type="PROSITE" id="PS50005">
    <property type="entry name" value="TPR"/>
    <property type="match status" value="2"/>
</dbReference>
<dbReference type="PROSITE" id="PS50293">
    <property type="entry name" value="TPR_REGION"/>
    <property type="match status" value="2"/>
</dbReference>
<organism>
    <name type="scientific">Schizosaccharomyces pombe (strain 972 / ATCC 24843)</name>
    <name type="common">Fission yeast</name>
    <dbReference type="NCBI Taxonomy" id="284812"/>
    <lineage>
        <taxon>Eukaryota</taxon>
        <taxon>Fungi</taxon>
        <taxon>Dikarya</taxon>
        <taxon>Ascomycota</taxon>
        <taxon>Taphrinomycotina</taxon>
        <taxon>Schizosaccharomycetes</taxon>
        <taxon>Schizosaccharomycetales</taxon>
        <taxon>Schizosaccharomycetaceae</taxon>
        <taxon>Schizosaccharomyces</taxon>
    </lineage>
</organism>
<accession>Q9P7N6</accession>
<feature type="transit peptide" description="Mitochondrion" evidence="1">
    <location>
        <begin position="1"/>
        <end position="20"/>
    </location>
</feature>
<feature type="chain" id="PRO_0000363380" description="TPR repeat-containing protein P27G11.02">
    <location>
        <begin position="21"/>
        <end position="356"/>
    </location>
</feature>
<feature type="repeat" description="TPR 1">
    <location>
        <begin position="194"/>
        <end position="227"/>
    </location>
</feature>
<feature type="repeat" description="TPR 2">
    <location>
        <begin position="290"/>
        <end position="323"/>
    </location>
</feature>
<keyword id="KW-0496">Mitochondrion</keyword>
<keyword id="KW-1185">Reference proteome</keyword>
<keyword id="KW-0677">Repeat</keyword>
<keyword id="KW-0802">TPR repeat</keyword>
<keyword id="KW-0809">Transit peptide</keyword>
<reference key="1">
    <citation type="journal article" date="2002" name="Nature">
        <title>The genome sequence of Schizosaccharomyces pombe.</title>
        <authorList>
            <person name="Wood V."/>
            <person name="Gwilliam R."/>
            <person name="Rajandream M.A."/>
            <person name="Lyne M.H."/>
            <person name="Lyne R."/>
            <person name="Stewart A."/>
            <person name="Sgouros J.G."/>
            <person name="Peat N."/>
            <person name="Hayles J."/>
            <person name="Baker S.G."/>
            <person name="Basham D."/>
            <person name="Bowman S."/>
            <person name="Brooks K."/>
            <person name="Brown D."/>
            <person name="Brown S."/>
            <person name="Chillingworth T."/>
            <person name="Churcher C.M."/>
            <person name="Collins M."/>
            <person name="Connor R."/>
            <person name="Cronin A."/>
            <person name="Davis P."/>
            <person name="Feltwell T."/>
            <person name="Fraser A."/>
            <person name="Gentles S."/>
            <person name="Goble A."/>
            <person name="Hamlin N."/>
            <person name="Harris D.E."/>
            <person name="Hidalgo J."/>
            <person name="Hodgson G."/>
            <person name="Holroyd S."/>
            <person name="Hornsby T."/>
            <person name="Howarth S."/>
            <person name="Huckle E.J."/>
            <person name="Hunt S."/>
            <person name="Jagels K."/>
            <person name="James K.D."/>
            <person name="Jones L."/>
            <person name="Jones M."/>
            <person name="Leather S."/>
            <person name="McDonald S."/>
            <person name="McLean J."/>
            <person name="Mooney P."/>
            <person name="Moule S."/>
            <person name="Mungall K.L."/>
            <person name="Murphy L.D."/>
            <person name="Niblett D."/>
            <person name="Odell C."/>
            <person name="Oliver K."/>
            <person name="O'Neil S."/>
            <person name="Pearson D."/>
            <person name="Quail M.A."/>
            <person name="Rabbinowitsch E."/>
            <person name="Rutherford K.M."/>
            <person name="Rutter S."/>
            <person name="Saunders D."/>
            <person name="Seeger K."/>
            <person name="Sharp S."/>
            <person name="Skelton J."/>
            <person name="Simmonds M.N."/>
            <person name="Squares R."/>
            <person name="Squares S."/>
            <person name="Stevens K."/>
            <person name="Taylor K."/>
            <person name="Taylor R.G."/>
            <person name="Tivey A."/>
            <person name="Walsh S.V."/>
            <person name="Warren T."/>
            <person name="Whitehead S."/>
            <person name="Woodward J.R."/>
            <person name="Volckaert G."/>
            <person name="Aert R."/>
            <person name="Robben J."/>
            <person name="Grymonprez B."/>
            <person name="Weltjens I."/>
            <person name="Vanstreels E."/>
            <person name="Rieger M."/>
            <person name="Schaefer M."/>
            <person name="Mueller-Auer S."/>
            <person name="Gabel C."/>
            <person name="Fuchs M."/>
            <person name="Duesterhoeft A."/>
            <person name="Fritzc C."/>
            <person name="Holzer E."/>
            <person name="Moestl D."/>
            <person name="Hilbert H."/>
            <person name="Borzym K."/>
            <person name="Langer I."/>
            <person name="Beck A."/>
            <person name="Lehrach H."/>
            <person name="Reinhardt R."/>
            <person name="Pohl T.M."/>
            <person name="Eger P."/>
            <person name="Zimmermann W."/>
            <person name="Wedler H."/>
            <person name="Wambutt R."/>
            <person name="Purnelle B."/>
            <person name="Goffeau A."/>
            <person name="Cadieu E."/>
            <person name="Dreano S."/>
            <person name="Gloux S."/>
            <person name="Lelaure V."/>
            <person name="Mottier S."/>
            <person name="Galibert F."/>
            <person name="Aves S.J."/>
            <person name="Xiang Z."/>
            <person name="Hunt C."/>
            <person name="Moore K."/>
            <person name="Hurst S.M."/>
            <person name="Lucas M."/>
            <person name="Rochet M."/>
            <person name="Gaillardin C."/>
            <person name="Tallada V.A."/>
            <person name="Garzon A."/>
            <person name="Thode G."/>
            <person name="Daga R.R."/>
            <person name="Cruzado L."/>
            <person name="Jimenez J."/>
            <person name="Sanchez M."/>
            <person name="del Rey F."/>
            <person name="Benito J."/>
            <person name="Dominguez A."/>
            <person name="Revuelta J.L."/>
            <person name="Moreno S."/>
            <person name="Armstrong J."/>
            <person name="Forsburg S.L."/>
            <person name="Cerutti L."/>
            <person name="Lowe T."/>
            <person name="McCombie W.R."/>
            <person name="Paulsen I."/>
            <person name="Potashkin J."/>
            <person name="Shpakovski G.V."/>
            <person name="Ussery D."/>
            <person name="Barrell B.G."/>
            <person name="Nurse P."/>
        </authorList>
    </citation>
    <scope>NUCLEOTIDE SEQUENCE [LARGE SCALE GENOMIC DNA]</scope>
    <source>
        <strain>972 / ATCC 24843</strain>
    </source>
</reference>
<reference key="2">
    <citation type="journal article" date="2006" name="Nat. Biotechnol.">
        <title>ORFeome cloning and global analysis of protein localization in the fission yeast Schizosaccharomyces pombe.</title>
        <authorList>
            <person name="Matsuyama A."/>
            <person name="Arai R."/>
            <person name="Yashiroda Y."/>
            <person name="Shirai A."/>
            <person name="Kamata A."/>
            <person name="Sekido S."/>
            <person name="Kobayashi Y."/>
            <person name="Hashimoto A."/>
            <person name="Hamamoto M."/>
            <person name="Hiraoka Y."/>
            <person name="Horinouchi S."/>
            <person name="Yoshida M."/>
        </authorList>
    </citation>
    <scope>SUBCELLULAR LOCATION [LARGE SCALE ANALYSIS]</scope>
</reference>
<gene>
    <name type="ORF">SPAP27G11.02</name>
</gene>